<reference key="1">
    <citation type="journal article" date="1994" name="Curr. Genet.">
        <title>PET112, a Saccharomyces cerevisiae nuclear gene required to maintain rho+ mitochondrial DNA.</title>
        <authorList>
            <person name="Mulero J.J."/>
            <person name="Rosenthal J.K."/>
            <person name="Fox T.D."/>
        </authorList>
    </citation>
    <scope>NUCLEOTIDE SEQUENCE [GENOMIC DNA]</scope>
</reference>
<reference key="2">
    <citation type="journal article" date="1995" name="Yeast">
        <title>Sequence analysis of a 78.6 kb segment of the left end of Saccharomyces cerevisiae chromosome II.</title>
        <authorList>
            <person name="Obermaier B."/>
            <person name="Gassenhuber J."/>
            <person name="Piravandi E."/>
            <person name="Domdey H."/>
        </authorList>
    </citation>
    <scope>NUCLEOTIDE SEQUENCE [GENOMIC DNA]</scope>
    <source>
        <strain>ATCC 204508 / S288c</strain>
    </source>
</reference>
<reference key="3">
    <citation type="journal article" date="1994" name="EMBO J.">
        <title>Complete DNA sequence of yeast chromosome II.</title>
        <authorList>
            <person name="Feldmann H."/>
            <person name="Aigle M."/>
            <person name="Aljinovic G."/>
            <person name="Andre B."/>
            <person name="Baclet M.C."/>
            <person name="Barthe C."/>
            <person name="Baur A."/>
            <person name="Becam A.-M."/>
            <person name="Biteau N."/>
            <person name="Boles E."/>
            <person name="Brandt T."/>
            <person name="Brendel M."/>
            <person name="Brueckner M."/>
            <person name="Bussereau F."/>
            <person name="Christiansen C."/>
            <person name="Contreras R."/>
            <person name="Crouzet M."/>
            <person name="Cziepluch C."/>
            <person name="Demolis N."/>
            <person name="Delaveau T."/>
            <person name="Doignon F."/>
            <person name="Domdey H."/>
            <person name="Duesterhus S."/>
            <person name="Dubois E."/>
            <person name="Dujon B."/>
            <person name="El Bakkoury M."/>
            <person name="Entian K.-D."/>
            <person name="Feuermann M."/>
            <person name="Fiers W."/>
            <person name="Fobo G.M."/>
            <person name="Fritz C."/>
            <person name="Gassenhuber J."/>
            <person name="Glansdorff N."/>
            <person name="Goffeau A."/>
            <person name="Grivell L.A."/>
            <person name="de Haan M."/>
            <person name="Hein C."/>
            <person name="Herbert C.J."/>
            <person name="Hollenberg C.P."/>
            <person name="Holmstroem K."/>
            <person name="Jacq C."/>
            <person name="Jacquet M."/>
            <person name="Jauniaux J.-C."/>
            <person name="Jonniaux J.-L."/>
            <person name="Kallesoee T."/>
            <person name="Kiesau P."/>
            <person name="Kirchrath L."/>
            <person name="Koetter P."/>
            <person name="Korol S."/>
            <person name="Liebl S."/>
            <person name="Logghe M."/>
            <person name="Lohan A.J.E."/>
            <person name="Louis E.J."/>
            <person name="Li Z.Y."/>
            <person name="Maat M.J."/>
            <person name="Mallet L."/>
            <person name="Mannhaupt G."/>
            <person name="Messenguy F."/>
            <person name="Miosga T."/>
            <person name="Molemans F."/>
            <person name="Mueller S."/>
            <person name="Nasr F."/>
            <person name="Obermaier B."/>
            <person name="Perea J."/>
            <person name="Pierard A."/>
            <person name="Piravandi E."/>
            <person name="Pohl F.M."/>
            <person name="Pohl T.M."/>
            <person name="Potier S."/>
            <person name="Proft M."/>
            <person name="Purnelle B."/>
            <person name="Ramezani Rad M."/>
            <person name="Rieger M."/>
            <person name="Rose M."/>
            <person name="Schaaff-Gerstenschlaeger I."/>
            <person name="Scherens B."/>
            <person name="Schwarzlose C."/>
            <person name="Skala J."/>
            <person name="Slonimski P.P."/>
            <person name="Smits P.H.M."/>
            <person name="Souciet J.-L."/>
            <person name="Steensma H.Y."/>
            <person name="Stucka R."/>
            <person name="Urrestarazu L.A."/>
            <person name="van der Aart Q.J.M."/>
            <person name="Van Dyck L."/>
            <person name="Vassarotti A."/>
            <person name="Vetter I."/>
            <person name="Vierendeels F."/>
            <person name="Vissers S."/>
            <person name="Wagner G."/>
            <person name="de Wergifosse P."/>
            <person name="Wolfe K.H."/>
            <person name="Zagulski M."/>
            <person name="Zimmermann F.K."/>
            <person name="Mewes H.-W."/>
            <person name="Kleine K."/>
        </authorList>
    </citation>
    <scope>NUCLEOTIDE SEQUENCE [LARGE SCALE GENOMIC DNA]</scope>
    <source>
        <strain>ATCC 204508 / S288c</strain>
    </source>
</reference>
<reference key="4">
    <citation type="journal article" date="2014" name="G3 (Bethesda)">
        <title>The reference genome sequence of Saccharomyces cerevisiae: Then and now.</title>
        <authorList>
            <person name="Engel S.R."/>
            <person name="Dietrich F.S."/>
            <person name="Fisk D.G."/>
            <person name="Binkley G."/>
            <person name="Balakrishnan R."/>
            <person name="Costanzo M.C."/>
            <person name="Dwight S.S."/>
            <person name="Hitz B.C."/>
            <person name="Karra K."/>
            <person name="Nash R.S."/>
            <person name="Weng S."/>
            <person name="Wong E.D."/>
            <person name="Lloyd P."/>
            <person name="Skrzypek M.S."/>
            <person name="Miyasato S.R."/>
            <person name="Simison M."/>
            <person name="Cherry J.M."/>
        </authorList>
    </citation>
    <scope>GENOME REANNOTATION</scope>
    <scope>SEQUENCE REVISION TO 415</scope>
    <source>
        <strain>ATCC 204508 / S288c</strain>
    </source>
</reference>
<reference key="5">
    <citation type="journal article" date="2003" name="Nature">
        <title>Global analysis of protein expression in yeast.</title>
        <authorList>
            <person name="Ghaemmaghami S."/>
            <person name="Huh W.-K."/>
            <person name="Bower K."/>
            <person name="Howson R.W."/>
            <person name="Belle A."/>
            <person name="Dephoure N."/>
            <person name="O'Shea E.K."/>
            <person name="Weissman J.S."/>
        </authorList>
    </citation>
    <scope>LEVEL OF PROTEIN EXPRESSION [LARGE SCALE ANALYSIS]</scope>
</reference>
<reference key="6">
    <citation type="journal article" date="2003" name="Proc. Natl. Acad. Sci. U.S.A.">
        <title>The proteome of Saccharomyces cerevisiae mitochondria.</title>
        <authorList>
            <person name="Sickmann A."/>
            <person name="Reinders J."/>
            <person name="Wagner Y."/>
            <person name="Joppich C."/>
            <person name="Zahedi R.P."/>
            <person name="Meyer H.E."/>
            <person name="Schoenfisch B."/>
            <person name="Perschil I."/>
            <person name="Chacinska A."/>
            <person name="Guiard B."/>
            <person name="Rehling P."/>
            <person name="Pfanner N."/>
            <person name="Meisinger C."/>
        </authorList>
    </citation>
    <scope>SUBCELLULAR LOCATION [LARGE SCALE ANALYSIS]</scope>
    <source>
        <strain>ATCC 76625 / YPH499</strain>
    </source>
</reference>
<reference key="7">
    <citation type="journal article" date="2009" name="Genes Dev.">
        <title>Yeast mitochondrial Gln-tRNA(Gln) is generated by a GatFAB-mediated transamidation pathway involving Arc1p-controlled subcellular sorting of cytosolic GluRS.</title>
        <authorList>
            <person name="Frechin M."/>
            <person name="Senger B."/>
            <person name="Braye M."/>
            <person name="Kern D."/>
            <person name="Martin R.P."/>
            <person name="Becker H.D."/>
        </authorList>
    </citation>
    <scope>FUNCTION</scope>
    <scope>INTERACTION WITH HER2 AND YGR102C</scope>
    <scope>SUBCELLULAR LOCATION</scope>
</reference>
<gene>
    <name evidence="1" type="primary">PET112</name>
    <name type="ordered locus">YBL080C</name>
    <name type="ORF">YBL0724</name>
</gene>
<protein>
    <recommendedName>
        <fullName evidence="1">Glutamyl-tRNA(Gln) amidotransferase subunit B, mitochondrial</fullName>
        <shortName evidence="1">Glu-AdT subunit B</shortName>
        <ecNumber evidence="1">6.3.5.-</ecNumber>
    </recommendedName>
    <alternativeName>
        <fullName>Cytochrome c oxidase assembly factor PET112</fullName>
    </alternativeName>
</protein>
<feature type="chain" id="PRO_0000010712" description="Glutamyl-tRNA(Gln) amidotransferase subunit B, mitochondrial">
    <location>
        <begin position="1"/>
        <end position="541"/>
    </location>
</feature>
<feature type="sequence conflict" description="In Ref. 2; CAA56028 and 3; CAA84901." evidence="5" ref="2 3">
    <original>P</original>
    <variation>A</variation>
    <location>
        <position position="415"/>
    </location>
</feature>
<feature type="strand" evidence="6">
    <location>
        <begin position="29"/>
        <end position="38"/>
    </location>
</feature>
<feature type="strand" evidence="6">
    <location>
        <begin position="45"/>
        <end position="47"/>
    </location>
</feature>
<feature type="turn" evidence="6">
    <location>
        <begin position="55"/>
        <end position="57"/>
    </location>
</feature>
<feature type="turn" evidence="6">
    <location>
        <begin position="66"/>
        <end position="70"/>
    </location>
</feature>
<feature type="helix" evidence="6">
    <location>
        <begin position="80"/>
        <end position="93"/>
    </location>
</feature>
<feature type="strand" evidence="6">
    <location>
        <begin position="99"/>
        <end position="101"/>
    </location>
</feature>
<feature type="strand" evidence="6">
    <location>
        <begin position="104"/>
        <end position="107"/>
    </location>
</feature>
<feature type="strand" evidence="6">
    <location>
        <begin position="116"/>
        <end position="120"/>
    </location>
</feature>
<feature type="strand" evidence="6">
    <location>
        <begin position="122"/>
        <end position="124"/>
    </location>
</feature>
<feature type="strand" evidence="6">
    <location>
        <begin position="126"/>
        <end position="128"/>
    </location>
</feature>
<feature type="strand" evidence="6">
    <location>
        <begin position="131"/>
        <end position="135"/>
    </location>
</feature>
<feature type="helix" evidence="6">
    <location>
        <begin position="136"/>
        <end position="139"/>
    </location>
</feature>
<feature type="strand" evidence="6">
    <location>
        <begin position="142"/>
        <end position="157"/>
    </location>
</feature>
<feature type="strand" evidence="6">
    <location>
        <begin position="161"/>
        <end position="164"/>
    </location>
</feature>
<feature type="strand" evidence="6">
    <location>
        <begin position="172"/>
        <end position="176"/>
    </location>
</feature>
<feature type="strand" evidence="6">
    <location>
        <begin position="183"/>
        <end position="189"/>
    </location>
</feature>
<feature type="helix" evidence="6">
    <location>
        <begin position="196"/>
        <end position="212"/>
    </location>
</feature>
<feature type="turn" evidence="6">
    <location>
        <begin position="220"/>
        <end position="223"/>
    </location>
</feature>
<feature type="strand" evidence="6">
    <location>
        <begin position="224"/>
        <end position="233"/>
    </location>
</feature>
<feature type="strand" evidence="6">
    <location>
        <begin position="239"/>
        <end position="241"/>
    </location>
</feature>
<feature type="helix" evidence="6">
    <location>
        <begin position="247"/>
        <end position="263"/>
    </location>
</feature>
<feature type="strand" evidence="6">
    <location>
        <begin position="277"/>
        <end position="279"/>
    </location>
</feature>
<feature type="strand" evidence="6">
    <location>
        <begin position="304"/>
        <end position="306"/>
    </location>
</feature>
<feature type="strand" evidence="7">
    <location>
        <begin position="309"/>
        <end position="311"/>
    </location>
</feature>
<feature type="helix" evidence="6">
    <location>
        <begin position="313"/>
        <end position="321"/>
    </location>
</feature>
<name>GATB_YEAST</name>
<evidence type="ECO:0000255" key="1">
    <source>
        <dbReference type="HAMAP-Rule" id="MF_03147"/>
    </source>
</evidence>
<evidence type="ECO:0000269" key="2">
    <source>
    </source>
</evidence>
<evidence type="ECO:0000269" key="3">
    <source>
    </source>
</evidence>
<evidence type="ECO:0000269" key="4">
    <source>
    </source>
</evidence>
<evidence type="ECO:0000305" key="5"/>
<evidence type="ECO:0007829" key="6">
    <source>
        <dbReference type="PDB" id="4N0H"/>
    </source>
</evidence>
<evidence type="ECO:0007829" key="7">
    <source>
        <dbReference type="PDB" id="4N0I"/>
    </source>
</evidence>
<proteinExistence type="evidence at protein level"/>
<accession>P33893</accession>
<accession>D6VPS3</accession>
<organism>
    <name type="scientific">Saccharomyces cerevisiae (strain ATCC 204508 / S288c)</name>
    <name type="common">Baker's yeast</name>
    <dbReference type="NCBI Taxonomy" id="559292"/>
    <lineage>
        <taxon>Eukaryota</taxon>
        <taxon>Fungi</taxon>
        <taxon>Dikarya</taxon>
        <taxon>Ascomycota</taxon>
        <taxon>Saccharomycotina</taxon>
        <taxon>Saccharomycetes</taxon>
        <taxon>Saccharomycetales</taxon>
        <taxon>Saccharomycetaceae</taxon>
        <taxon>Saccharomyces</taxon>
    </lineage>
</organism>
<comment type="function">
    <text evidence="1 4">Allows the formation of correctly charged Gln-tRNA(Gln) through the transamidation of misacylated Glu-tRNA(Gln) in the mitochondria. The reaction takes place in the presence of glutamine and ATP through an activated gamma-phospho-Glu-tRNA(Gln).</text>
</comment>
<comment type="catalytic activity">
    <reaction evidence="1">
        <text>L-glutamyl-tRNA(Gln) + L-glutamine + ATP + H2O = L-glutaminyl-tRNA(Gln) + L-glutamate + ADP + phosphate + H(+)</text>
        <dbReference type="Rhea" id="RHEA:17521"/>
        <dbReference type="Rhea" id="RHEA-COMP:9681"/>
        <dbReference type="Rhea" id="RHEA-COMP:9684"/>
        <dbReference type="ChEBI" id="CHEBI:15377"/>
        <dbReference type="ChEBI" id="CHEBI:15378"/>
        <dbReference type="ChEBI" id="CHEBI:29985"/>
        <dbReference type="ChEBI" id="CHEBI:30616"/>
        <dbReference type="ChEBI" id="CHEBI:43474"/>
        <dbReference type="ChEBI" id="CHEBI:58359"/>
        <dbReference type="ChEBI" id="CHEBI:78520"/>
        <dbReference type="ChEBI" id="CHEBI:78521"/>
        <dbReference type="ChEBI" id="CHEBI:456216"/>
    </reaction>
</comment>
<comment type="subunit">
    <text>Subunit of the heterotrimeric GatFAB amidotransferase (AdT) complex, composed of A (HER2), B (PET112) and F (YGR102C) subunits.</text>
</comment>
<comment type="subcellular location">
    <subcellularLocation>
        <location evidence="1 3 4">Mitochondrion</location>
    </subcellularLocation>
</comment>
<comment type="miscellaneous">
    <text evidence="2">Present with 1390 molecules/cell in log phase SD medium.</text>
</comment>
<comment type="miscellaneous">
    <text evidence="1">This protein may be expected to contain an N-terminal transit peptide but none has been predicted.</text>
</comment>
<comment type="similarity">
    <text evidence="1">Belongs to the GatB/GatE family. GatB subfamily.</text>
</comment>
<dbReference type="EC" id="6.3.5.-" evidence="1"/>
<dbReference type="EMBL" id="L22072">
    <property type="protein sequence ID" value="AAC37508.1"/>
    <property type="molecule type" value="Genomic_DNA"/>
</dbReference>
<dbReference type="EMBL" id="X79489">
    <property type="protein sequence ID" value="CAA56028.1"/>
    <property type="molecule type" value="Genomic_DNA"/>
</dbReference>
<dbReference type="EMBL" id="Z35841">
    <property type="protein sequence ID" value="CAA84901.1"/>
    <property type="molecule type" value="Genomic_DNA"/>
</dbReference>
<dbReference type="EMBL" id="BK006936">
    <property type="protein sequence ID" value="DAA07043.2"/>
    <property type="molecule type" value="Genomic_DNA"/>
</dbReference>
<dbReference type="PIR" id="S45428">
    <property type="entry name" value="S45428"/>
</dbReference>
<dbReference type="RefSeq" id="NP_009473.2">
    <property type="nucleotide sequence ID" value="NM_001178320.2"/>
</dbReference>
<dbReference type="PDB" id="4N0H">
    <property type="method" value="X-ray"/>
    <property type="resolution" value="1.95 A"/>
    <property type="chains" value="B=16-329"/>
</dbReference>
<dbReference type="PDB" id="4N0I">
    <property type="method" value="X-ray"/>
    <property type="resolution" value="2.00 A"/>
    <property type="chains" value="B=16-329"/>
</dbReference>
<dbReference type="PDBsum" id="4N0H"/>
<dbReference type="PDBsum" id="4N0I"/>
<dbReference type="SMR" id="P33893"/>
<dbReference type="BioGRID" id="32623">
    <property type="interactions" value="68"/>
</dbReference>
<dbReference type="ComplexPortal" id="CPX-416">
    <property type="entry name" value="Glutamyl-tRNA(Gln) amidotransferase complex"/>
</dbReference>
<dbReference type="DIP" id="DIP-5011N"/>
<dbReference type="FunCoup" id="P33893">
    <property type="interactions" value="456"/>
</dbReference>
<dbReference type="IntAct" id="P33893">
    <property type="interactions" value="6"/>
</dbReference>
<dbReference type="STRING" id="4932.YBL080C"/>
<dbReference type="PaxDb" id="4932-YBL080C"/>
<dbReference type="PeptideAtlas" id="P33893"/>
<dbReference type="EnsemblFungi" id="YBL080C_mRNA">
    <property type="protein sequence ID" value="YBL080C"/>
    <property type="gene ID" value="YBL080C"/>
</dbReference>
<dbReference type="GeneID" id="852198"/>
<dbReference type="KEGG" id="sce:YBL080C"/>
<dbReference type="AGR" id="SGD:S000000176"/>
<dbReference type="SGD" id="S000000176">
    <property type="gene designation" value="PET112"/>
</dbReference>
<dbReference type="VEuPathDB" id="FungiDB:YBL080C"/>
<dbReference type="eggNOG" id="KOG2438">
    <property type="taxonomic scope" value="Eukaryota"/>
</dbReference>
<dbReference type="GeneTree" id="ENSGT00390000016644"/>
<dbReference type="HOGENOM" id="CLU_019240_4_0_1"/>
<dbReference type="InParanoid" id="P33893"/>
<dbReference type="OMA" id="ARKWWMG"/>
<dbReference type="OrthoDB" id="1722066at2759"/>
<dbReference type="BioCyc" id="YEAST:G3O-28971-MONOMER"/>
<dbReference type="BioGRID-ORCS" id="852198">
    <property type="hits" value="1 hit in 10 CRISPR screens"/>
</dbReference>
<dbReference type="EvolutionaryTrace" id="P33893"/>
<dbReference type="PRO" id="PR:P33893"/>
<dbReference type="Proteomes" id="UP000002311">
    <property type="component" value="Chromosome II"/>
</dbReference>
<dbReference type="RNAct" id="P33893">
    <property type="molecule type" value="protein"/>
</dbReference>
<dbReference type="GO" id="GO:0030956">
    <property type="term" value="C:glutamyl-tRNA(Gln) amidotransferase complex"/>
    <property type="evidence" value="ECO:0000314"/>
    <property type="project" value="SGD"/>
</dbReference>
<dbReference type="GO" id="GO:0005739">
    <property type="term" value="C:mitochondrion"/>
    <property type="evidence" value="ECO:0000314"/>
    <property type="project" value="ComplexPortal"/>
</dbReference>
<dbReference type="GO" id="GO:0005524">
    <property type="term" value="F:ATP binding"/>
    <property type="evidence" value="ECO:0007669"/>
    <property type="project" value="UniProtKB-KW"/>
</dbReference>
<dbReference type="GO" id="GO:0050567">
    <property type="term" value="F:glutaminyl-tRNA synthase (glutamine-hydrolyzing) activity"/>
    <property type="evidence" value="ECO:0000314"/>
    <property type="project" value="SGD"/>
</dbReference>
<dbReference type="GO" id="GO:0070681">
    <property type="term" value="P:glutaminyl-tRNAGln biosynthesis via transamidation"/>
    <property type="evidence" value="ECO:0000314"/>
    <property type="project" value="ComplexPortal"/>
</dbReference>
<dbReference type="GO" id="GO:0032543">
    <property type="term" value="P:mitochondrial translation"/>
    <property type="evidence" value="ECO:0000315"/>
    <property type="project" value="SGD"/>
</dbReference>
<dbReference type="FunFam" id="1.10.10.410:FF:000005">
    <property type="entry name" value="Glutamyl-tRNA(Gln) amidotransferase subunit B, mitochondrial"/>
    <property type="match status" value="1"/>
</dbReference>
<dbReference type="Gene3D" id="1.10.10.410">
    <property type="match status" value="1"/>
</dbReference>
<dbReference type="HAMAP" id="MF_00121">
    <property type="entry name" value="GatB"/>
    <property type="match status" value="1"/>
</dbReference>
<dbReference type="InterPro" id="IPR017959">
    <property type="entry name" value="Asn/Gln-tRNA_amidoTrfase_suB/E"/>
</dbReference>
<dbReference type="InterPro" id="IPR006075">
    <property type="entry name" value="Asn/Gln-tRNA_Trfase_suB/E_cat"/>
</dbReference>
<dbReference type="InterPro" id="IPR018027">
    <property type="entry name" value="Asn/Gln_amidotransferase"/>
</dbReference>
<dbReference type="InterPro" id="IPR003789">
    <property type="entry name" value="Asn/Gln_tRNA_amidoTrase-B-like"/>
</dbReference>
<dbReference type="InterPro" id="IPR004413">
    <property type="entry name" value="GatB"/>
</dbReference>
<dbReference type="InterPro" id="IPR023168">
    <property type="entry name" value="GatB_Yqey_C_2"/>
</dbReference>
<dbReference type="InterPro" id="IPR017958">
    <property type="entry name" value="Gln-tRNA_amidoTrfase_suB_CS"/>
</dbReference>
<dbReference type="InterPro" id="IPR014746">
    <property type="entry name" value="Gln_synth/guanido_kin_cat_dom"/>
</dbReference>
<dbReference type="NCBIfam" id="TIGR00133">
    <property type="entry name" value="gatB"/>
    <property type="match status" value="1"/>
</dbReference>
<dbReference type="NCBIfam" id="NF004012">
    <property type="entry name" value="PRK05477.1-2"/>
    <property type="match status" value="1"/>
</dbReference>
<dbReference type="PANTHER" id="PTHR11659">
    <property type="entry name" value="GLUTAMYL-TRNA GLN AMIDOTRANSFERASE SUBUNIT B MITOCHONDRIAL AND PROKARYOTIC PET112-RELATED"/>
    <property type="match status" value="1"/>
</dbReference>
<dbReference type="PANTHER" id="PTHR11659:SF0">
    <property type="entry name" value="GLUTAMYL-TRNA(GLN) AMIDOTRANSFERASE SUBUNIT B, MITOCHONDRIAL"/>
    <property type="match status" value="1"/>
</dbReference>
<dbReference type="Pfam" id="PF02934">
    <property type="entry name" value="GatB_N"/>
    <property type="match status" value="1"/>
</dbReference>
<dbReference type="Pfam" id="PF02637">
    <property type="entry name" value="GatB_Yqey"/>
    <property type="match status" value="1"/>
</dbReference>
<dbReference type="SMART" id="SM00845">
    <property type="entry name" value="GatB_Yqey"/>
    <property type="match status" value="1"/>
</dbReference>
<dbReference type="SUPFAM" id="SSF89095">
    <property type="entry name" value="GatB/YqeY motif"/>
    <property type="match status" value="1"/>
</dbReference>
<dbReference type="SUPFAM" id="SSF55931">
    <property type="entry name" value="Glutamine synthetase/guanido kinase"/>
    <property type="match status" value="1"/>
</dbReference>
<dbReference type="PROSITE" id="PS01234">
    <property type="entry name" value="GATB"/>
    <property type="match status" value="1"/>
</dbReference>
<keyword id="KW-0002">3D-structure</keyword>
<keyword id="KW-0067">ATP-binding</keyword>
<keyword id="KW-0436">Ligase</keyword>
<keyword id="KW-0496">Mitochondrion</keyword>
<keyword id="KW-0547">Nucleotide-binding</keyword>
<keyword id="KW-0648">Protein biosynthesis</keyword>
<keyword id="KW-1185">Reference proteome</keyword>
<keyword id="KW-0809">Transit peptide</keyword>
<sequence>MLRLARFYSLARTKAIHSHGAPFRPEYALKCGLEIHTQLNTKNKLFSQSTNSATSLVDAPNHHTSYYDIALPGTQPVLNLEAILFAMKLSLALGSQVNSISQFDRKHYFYGDQPQGYQLTQHYRPFARGGKINLSKELDDIDESAKEIGILQLQIEQDTGKSHYTETDKDVITLVDLNRSNVPLIELVTKPDFSDIKQVRAFIKKYQNLVRHLHISSGDLETGAMRVDVNLSINEYARVELKNLPNTSSIINAIKYEYQRQVELISVGDTSSLMEPETRGWTGSSTVKLRSKETTIDYRYMPDPELPYINLAPDVISGVRGLMPQLPDDIMRILMKKPYQLSLKDAKILTYNSNQNDMYNHEALRSYYLDTFREFSKLAGERSNAKLPTNWIIHEFLGDLNKLQIPLAKAKEILPPPVFAQFLKLLHEEVISATSGKMLLFHILENFEQSNCQDLSIPDFSKLIEKFELHAINQVDPQELMDLCNDVIAQHTDDTFIRNLVTGKKKSSLKFLIGQGMRRSQGRIKANEFEKKFKEILNIQW</sequence>